<organism>
    <name type="scientific">Methylacidiphilum infernorum (isolate V4)</name>
    <name type="common">Methylokorus infernorum (strain V4)</name>
    <dbReference type="NCBI Taxonomy" id="481448"/>
    <lineage>
        <taxon>Bacteria</taxon>
        <taxon>Pseudomonadati</taxon>
        <taxon>Verrucomicrobiota</taxon>
        <taxon>Methylacidiphilae</taxon>
        <taxon>Methylacidiphilales</taxon>
        <taxon>Methylacidiphilaceae</taxon>
        <taxon>Methylacidiphilum (ex Ratnadevi et al. 2023)</taxon>
    </lineage>
</organism>
<keyword id="KW-0535">Nitrogen fixation</keyword>
<proteinExistence type="inferred from homology"/>
<dbReference type="EMBL" id="CP000975">
    <property type="protein sequence ID" value="ACD82530.1"/>
    <property type="molecule type" value="Genomic_DNA"/>
</dbReference>
<dbReference type="RefSeq" id="WP_012462812.1">
    <property type="nucleotide sequence ID" value="NC_010794.1"/>
</dbReference>
<dbReference type="SMR" id="B3DZB3"/>
<dbReference type="STRING" id="481448.Minf_0472"/>
<dbReference type="KEGG" id="min:Minf_0472"/>
<dbReference type="eggNOG" id="ENOG50330W8">
    <property type="taxonomic scope" value="Bacteria"/>
</dbReference>
<dbReference type="HOGENOM" id="CLU_145318_0_0_0"/>
<dbReference type="OrthoDB" id="9811868at2"/>
<dbReference type="Proteomes" id="UP000009149">
    <property type="component" value="Chromosome"/>
</dbReference>
<dbReference type="GO" id="GO:0009399">
    <property type="term" value="P:nitrogen fixation"/>
    <property type="evidence" value="ECO:0007669"/>
    <property type="project" value="UniProtKB-UniRule"/>
</dbReference>
<dbReference type="HAMAP" id="MF_00529">
    <property type="entry name" value="NifW"/>
    <property type="match status" value="1"/>
</dbReference>
<dbReference type="InterPro" id="IPR004893">
    <property type="entry name" value="NifW"/>
</dbReference>
<dbReference type="Pfam" id="PF03206">
    <property type="entry name" value="NifW"/>
    <property type="match status" value="1"/>
</dbReference>
<dbReference type="PIRSF" id="PIRSF005790">
    <property type="entry name" value="NifW"/>
    <property type="match status" value="1"/>
</dbReference>
<protein>
    <recommendedName>
        <fullName evidence="1">Nitrogenase-stabilizing/protective protein NifW</fullName>
    </recommendedName>
</protein>
<reference key="1">
    <citation type="journal article" date="2008" name="Biol. Direct">
        <title>Complete genome sequence of the extremely acidophilic methanotroph isolate V4, Methylacidiphilum infernorum, a representative of the bacterial phylum Verrucomicrobia.</title>
        <authorList>
            <person name="Hou S."/>
            <person name="Makarova K.S."/>
            <person name="Saw J.H."/>
            <person name="Senin P."/>
            <person name="Ly B.V."/>
            <person name="Zhou Z."/>
            <person name="Ren Y."/>
            <person name="Wang J."/>
            <person name="Galperin M.Y."/>
            <person name="Omelchenko M.V."/>
            <person name="Wolf Y.I."/>
            <person name="Yutin N."/>
            <person name="Koonin E.V."/>
            <person name="Stott M.B."/>
            <person name="Mountain B.W."/>
            <person name="Crowe M.A."/>
            <person name="Smirnova A.V."/>
            <person name="Dunfield P.F."/>
            <person name="Feng L."/>
            <person name="Wang L."/>
            <person name="Alam M."/>
        </authorList>
    </citation>
    <scope>NUCLEOTIDE SEQUENCE [LARGE SCALE GENOMIC DNA]</scope>
    <source>
        <strain>Isolate V4</strain>
    </source>
</reference>
<name>NIFW_METI4</name>
<comment type="function">
    <text evidence="1">May protect the nitrogenase Fe-Mo protein from oxidative damage.</text>
</comment>
<comment type="subunit">
    <text evidence="1">Homotrimer; associates with NifD.</text>
</comment>
<comment type="similarity">
    <text evidence="1">Belongs to the NifW family.</text>
</comment>
<accession>B3DZB3</accession>
<feature type="chain" id="PRO_1000146301" description="Nitrogenase-stabilizing/protective protein NifW">
    <location>
        <begin position="1"/>
        <end position="121"/>
    </location>
</feature>
<sequence length="121" mass="14124">MADSFLKKMEKLEAAEDFFKLLEIPYDIKVLRVYRLHILQRFHDYISAGSRDVGTQTEEQLKQYYGSLLEKAYRDFVHSTAQEEKVFKVFKEQQPASPRTEVRFVSLDSLIGGSKLKSKTL</sequence>
<gene>
    <name evidence="1" type="primary">nifW</name>
    <name type="ordered locus">Minf_0472</name>
</gene>
<evidence type="ECO:0000255" key="1">
    <source>
        <dbReference type="HAMAP-Rule" id="MF_00529"/>
    </source>
</evidence>